<proteinExistence type="inferred from homology"/>
<feature type="chain" id="PRO_1000214205" description="5-methylthioadenosine/S-adenosylhomocysteine deaminase">
    <location>
        <begin position="1"/>
        <end position="430"/>
    </location>
</feature>
<feature type="binding site" evidence="1">
    <location>
        <position position="63"/>
    </location>
    <ligand>
        <name>Zn(2+)</name>
        <dbReference type="ChEBI" id="CHEBI:29105"/>
    </ligand>
</feature>
<feature type="binding site" evidence="1">
    <location>
        <position position="65"/>
    </location>
    <ligand>
        <name>Zn(2+)</name>
        <dbReference type="ChEBI" id="CHEBI:29105"/>
    </ligand>
</feature>
<feature type="binding site" evidence="1">
    <location>
        <position position="92"/>
    </location>
    <ligand>
        <name>substrate</name>
    </ligand>
</feature>
<feature type="binding site" evidence="1">
    <location>
        <position position="144"/>
    </location>
    <ligand>
        <name>substrate</name>
    </ligand>
</feature>
<feature type="binding site" evidence="1">
    <location>
        <position position="182"/>
    </location>
    <ligand>
        <name>substrate</name>
    </ligand>
</feature>
<feature type="binding site" evidence="1">
    <location>
        <position position="209"/>
    </location>
    <ligand>
        <name>Zn(2+)</name>
        <dbReference type="ChEBI" id="CHEBI:29105"/>
    </ligand>
</feature>
<feature type="binding site" evidence="1">
    <location>
        <position position="212"/>
    </location>
    <ligand>
        <name>substrate</name>
    </ligand>
</feature>
<feature type="binding site" evidence="1">
    <location>
        <position position="297"/>
    </location>
    <ligand>
        <name>substrate</name>
    </ligand>
</feature>
<feature type="binding site" evidence="1">
    <location>
        <position position="297"/>
    </location>
    <ligand>
        <name>Zn(2+)</name>
        <dbReference type="ChEBI" id="CHEBI:29105"/>
    </ligand>
</feature>
<comment type="function">
    <text evidence="1">Catalyzes the deamination of 5-methylthioadenosine and S-adenosyl-L-homocysteine into 5-methylthioinosine and S-inosyl-L-homocysteine, respectively. Is also able to deaminate adenosine.</text>
</comment>
<comment type="catalytic activity">
    <reaction evidence="1">
        <text>S-adenosyl-L-homocysteine + H2O + H(+) = S-inosyl-L-homocysteine + NH4(+)</text>
        <dbReference type="Rhea" id="RHEA:20716"/>
        <dbReference type="ChEBI" id="CHEBI:15377"/>
        <dbReference type="ChEBI" id="CHEBI:15378"/>
        <dbReference type="ChEBI" id="CHEBI:28938"/>
        <dbReference type="ChEBI" id="CHEBI:57856"/>
        <dbReference type="ChEBI" id="CHEBI:57985"/>
        <dbReference type="EC" id="3.5.4.28"/>
    </reaction>
</comment>
<comment type="catalytic activity">
    <reaction evidence="1">
        <text>S-methyl-5'-thioadenosine + H2O + H(+) = S-methyl-5'-thioinosine + NH4(+)</text>
        <dbReference type="Rhea" id="RHEA:25025"/>
        <dbReference type="ChEBI" id="CHEBI:15377"/>
        <dbReference type="ChEBI" id="CHEBI:15378"/>
        <dbReference type="ChEBI" id="CHEBI:17509"/>
        <dbReference type="ChEBI" id="CHEBI:28938"/>
        <dbReference type="ChEBI" id="CHEBI:48595"/>
        <dbReference type="EC" id="3.5.4.31"/>
    </reaction>
</comment>
<comment type="cofactor">
    <cofactor evidence="1">
        <name>Zn(2+)</name>
        <dbReference type="ChEBI" id="CHEBI:29105"/>
    </cofactor>
    <text evidence="1">Binds 1 zinc ion per subunit.</text>
</comment>
<comment type="similarity">
    <text evidence="1">Belongs to the metallo-dependent hydrolases superfamily. MTA/SAH deaminase family.</text>
</comment>
<reference key="1">
    <citation type="submission" date="2007-10" db="EMBL/GenBank/DDBJ databases">
        <title>Complete sequence of chromosome of Desulforudis audaxviator MP104C.</title>
        <authorList>
            <person name="Copeland A."/>
            <person name="Lucas S."/>
            <person name="Lapidus A."/>
            <person name="Barry K."/>
            <person name="Glavina del Rio T."/>
            <person name="Dalin E."/>
            <person name="Tice H."/>
            <person name="Bruce D."/>
            <person name="Pitluck S."/>
            <person name="Lowry S.R."/>
            <person name="Larimer F."/>
            <person name="Land M.L."/>
            <person name="Hauser L."/>
            <person name="Kyrpides N."/>
            <person name="Ivanova N.N."/>
            <person name="Richardson P."/>
        </authorList>
    </citation>
    <scope>NUCLEOTIDE SEQUENCE [LARGE SCALE GENOMIC DNA]</scope>
    <source>
        <strain>MP104C</strain>
    </source>
</reference>
<gene>
    <name evidence="1" type="primary">mtaD</name>
    <name type="ordered locus">Daud_0651</name>
</gene>
<protein>
    <recommendedName>
        <fullName evidence="1">5-methylthioadenosine/S-adenosylhomocysteine deaminase</fullName>
        <shortName evidence="1">MTA/SAH deaminase</shortName>
        <ecNumber evidence="1">3.5.4.28</ecNumber>
        <ecNumber evidence="1">3.5.4.31</ecNumber>
    </recommendedName>
</protein>
<dbReference type="EC" id="3.5.4.28" evidence="1"/>
<dbReference type="EC" id="3.5.4.31" evidence="1"/>
<dbReference type="EMBL" id="CP000860">
    <property type="protein sequence ID" value="ACA59185.1"/>
    <property type="molecule type" value="Genomic_DNA"/>
</dbReference>
<dbReference type="RefSeq" id="WP_012301773.1">
    <property type="nucleotide sequence ID" value="NC_010424.1"/>
</dbReference>
<dbReference type="SMR" id="B1I2P4"/>
<dbReference type="STRING" id="477974.Daud_0651"/>
<dbReference type="KEGG" id="dau:Daud_0651"/>
<dbReference type="eggNOG" id="COG0402">
    <property type="taxonomic scope" value="Bacteria"/>
</dbReference>
<dbReference type="HOGENOM" id="CLU_012358_2_1_9"/>
<dbReference type="OrthoDB" id="9807210at2"/>
<dbReference type="Proteomes" id="UP000008544">
    <property type="component" value="Chromosome"/>
</dbReference>
<dbReference type="GO" id="GO:0090614">
    <property type="term" value="F:5'-methylthioadenosine deaminase activity"/>
    <property type="evidence" value="ECO:0007669"/>
    <property type="project" value="UniProtKB-UniRule"/>
</dbReference>
<dbReference type="GO" id="GO:0046872">
    <property type="term" value="F:metal ion binding"/>
    <property type="evidence" value="ECO:0007669"/>
    <property type="project" value="UniProtKB-KW"/>
</dbReference>
<dbReference type="GO" id="GO:0050270">
    <property type="term" value="F:S-adenosylhomocysteine deaminase activity"/>
    <property type="evidence" value="ECO:0007669"/>
    <property type="project" value="UniProtKB-UniRule"/>
</dbReference>
<dbReference type="CDD" id="cd01298">
    <property type="entry name" value="ATZ_TRZ_like"/>
    <property type="match status" value="1"/>
</dbReference>
<dbReference type="FunFam" id="3.20.20.140:FF:000014">
    <property type="entry name" value="5-methylthioadenosine/S-adenosylhomocysteine deaminase"/>
    <property type="match status" value="1"/>
</dbReference>
<dbReference type="Gene3D" id="3.20.20.140">
    <property type="entry name" value="Metal-dependent hydrolases"/>
    <property type="match status" value="1"/>
</dbReference>
<dbReference type="Gene3D" id="2.30.40.10">
    <property type="entry name" value="Urease, subunit C, domain 1"/>
    <property type="match status" value="1"/>
</dbReference>
<dbReference type="HAMAP" id="MF_01281">
    <property type="entry name" value="MTA_SAH_deamin"/>
    <property type="match status" value="1"/>
</dbReference>
<dbReference type="InterPro" id="IPR006680">
    <property type="entry name" value="Amidohydro-rel"/>
</dbReference>
<dbReference type="InterPro" id="IPR023512">
    <property type="entry name" value="Deaminase_MtaD/DadD"/>
</dbReference>
<dbReference type="InterPro" id="IPR011059">
    <property type="entry name" value="Metal-dep_hydrolase_composite"/>
</dbReference>
<dbReference type="InterPro" id="IPR032466">
    <property type="entry name" value="Metal_Hydrolase"/>
</dbReference>
<dbReference type="InterPro" id="IPR050287">
    <property type="entry name" value="MTA/SAH_deaminase"/>
</dbReference>
<dbReference type="PANTHER" id="PTHR43794:SF11">
    <property type="entry name" value="AMIDOHYDROLASE-RELATED DOMAIN-CONTAINING PROTEIN"/>
    <property type="match status" value="1"/>
</dbReference>
<dbReference type="PANTHER" id="PTHR43794">
    <property type="entry name" value="AMINOHYDROLASE SSNA-RELATED"/>
    <property type="match status" value="1"/>
</dbReference>
<dbReference type="Pfam" id="PF01979">
    <property type="entry name" value="Amidohydro_1"/>
    <property type="match status" value="1"/>
</dbReference>
<dbReference type="SUPFAM" id="SSF51338">
    <property type="entry name" value="Composite domain of metallo-dependent hydrolases"/>
    <property type="match status" value="1"/>
</dbReference>
<dbReference type="SUPFAM" id="SSF51556">
    <property type="entry name" value="Metallo-dependent hydrolases"/>
    <property type="match status" value="1"/>
</dbReference>
<keyword id="KW-0378">Hydrolase</keyword>
<keyword id="KW-0479">Metal-binding</keyword>
<keyword id="KW-1185">Reference proteome</keyword>
<keyword id="KW-0862">Zinc</keyword>
<accession>B1I2P4</accession>
<sequence>MRLLIRNAYVIPVAGSDFTGDVAVEEGRIVFAGPTGAVPGTFEADETIDATGMVATPGLVNCHTHAAMTLFRGYADDLPLMEWLTRKIWPVENLLTGDDIYWGSLLAGLEMLKSGTTTFADQYFEMDRVAQAVEEIGLRASLCRGLIGVSEHAEKALAEGCEFVRRWHGAAAGRISAMLGPHAPYTCPPAYLKKVVAASEELDVGLHIHLSETRTEIEQIKAEYGCSPIALMEETGLFHRPVLAAHCVHLSEADIKILARRGVGVAHNPQSNMKLASGIAPVVRMLAAGVRVGIGTDGAASNNDLNMVEEMRTAALLQKVAQGDPTVLPAGLVLEMATAGGARVLGLEDRIGTLEVGKRADVVLWRVNQPHLCPAHNYQAHLVYSAGRADVDTVIVDGHVVMRGRRVLTVDEETVLRQAERTARRLIESV</sequence>
<name>MTAD_DESAP</name>
<evidence type="ECO:0000255" key="1">
    <source>
        <dbReference type="HAMAP-Rule" id="MF_01281"/>
    </source>
</evidence>
<organism>
    <name type="scientific">Desulforudis audaxviator (strain MP104C)</name>
    <dbReference type="NCBI Taxonomy" id="477974"/>
    <lineage>
        <taxon>Bacteria</taxon>
        <taxon>Bacillati</taxon>
        <taxon>Bacillota</taxon>
        <taxon>Clostridia</taxon>
        <taxon>Thermoanaerobacterales</taxon>
        <taxon>Candidatus Desulforudaceae</taxon>
        <taxon>Candidatus Desulforudis</taxon>
    </lineage>
</organism>